<protein>
    <recommendedName>
        <fullName evidence="2">Tail sheath protein</fullName>
        <shortName>TSP</shortName>
    </recommendedName>
    <alternativeName>
        <fullName evidence="2">Gene product 124</fullName>
        <shortName>gp124</shortName>
    </alternativeName>
</protein>
<accession>Q853F7</accession>
<comment type="function">
    <text evidence="1">Polymerizes as an extended structure around the baseplate-tail tube complex. During ejection, the sheath shifts to a contracted form, thereby making the inner tail tube protrude through the host cell envelope.</text>
</comment>
<comment type="subunit">
    <text evidence="1">Homomultimer.</text>
</comment>
<comment type="subcellular location">
    <subcellularLocation>
        <location evidence="1">Virion</location>
    </subcellularLocation>
    <subcellularLocation>
        <location evidence="1">Host cytoplasm</location>
    </subcellularLocation>
    <text evidence="1">Tail.</text>
</comment>
<comment type="similarity">
    <text evidence="2">Belongs to the myoviridae tail sheath protein family.</text>
</comment>
<gene>
    <name evidence="3" type="primary">124</name>
</gene>
<sequence>MAIDFSQYQTPGVYTEAVGAPQLGIRSSVPTAVAIFGTAVGYQTYRESIRINPDTGETITTQILALVGEPTGGSFKLSLAGEPTGNIPFNATQGQVQSALRALPNVEDDEVTVLGDPGGPWTVTFTKAVAALTKDVTGLTGGDNPDLNIASEQTGVPAMNRALAKKGIKTDTIRVVNPNSGQVYVLGTDYVVTRVNAGEDGEANTRDDLYTIQRVVDGGHIDPGDIVQLSYRYTDPNYHEVIRFTDPDDIQDFYGPAFDEAGNVQSEITLCAQLAITNGASTILACAVDPEGDTVTMGDYQNALNKFRDEDEIAIIVAGTGAQPIQALVQQHVSAQSNNKYERRAILGMDGSVTPVPSATRIANAQSIKDQRVALISPSSFVYYAPELNREVVLGGQFMAAAVAGKSVSAIAAMPLTRKVIRGFSGPAEVQRDGEKSRESSEGLMVIEKTPRNLVHVRHGVTTDPTSLHTREWNIIGQQDVMVYRIRDYLDADGLIGMPIYDTTIVQVKASAEAALVWLVDNNIIRGYRNLKARQIERQPDVIEVRYEWRPAYPLNYIVVRYSIAPETGDITSTIEGTTSF</sequence>
<proteinExistence type="inferred from homology"/>
<organism evidence="4">
    <name type="scientific">Mycobacterium phage Bxz1</name>
    <name type="common">Mycobacteriophage Bxz1</name>
    <dbReference type="NCBI Taxonomy" id="205877"/>
    <lineage>
        <taxon>Viruses</taxon>
        <taxon>Duplodnaviria</taxon>
        <taxon>Heunggongvirae</taxon>
        <taxon>Uroviricota</taxon>
        <taxon>Caudoviricetes</taxon>
        <taxon>Ceeclamvirinae</taxon>
        <taxon>Bixzunavirus</taxon>
        <taxon>Bixzunavirus Bxz1</taxon>
    </lineage>
</organism>
<feature type="chain" id="PRO_0000432779" description="Tail sheath protein">
    <location>
        <begin position="1"/>
        <end position="581"/>
    </location>
</feature>
<organismHost>
    <name type="scientific">Mycolicibacterium smegmatis</name>
    <name type="common">Mycobacterium smegmatis</name>
    <dbReference type="NCBI Taxonomy" id="1772"/>
</organismHost>
<organismHost>
    <name type="scientific">Mycolicibacterium vaccae</name>
    <name type="common">Mycobacterium vaccae</name>
    <dbReference type="NCBI Taxonomy" id="1810"/>
</organismHost>
<dbReference type="EMBL" id="AY129337">
    <property type="protein sequence ID" value="AAN16780.1"/>
    <property type="molecule type" value="Genomic_DNA"/>
</dbReference>
<dbReference type="RefSeq" id="NP_818197.1">
    <property type="nucleotide sequence ID" value="NC_004687.1"/>
</dbReference>
<dbReference type="SMR" id="Q853F7"/>
<dbReference type="KEGG" id="vg:1259809"/>
<dbReference type="Proteomes" id="UP000000730">
    <property type="component" value="Genome"/>
</dbReference>
<dbReference type="GO" id="GO:0030430">
    <property type="term" value="C:host cell cytoplasm"/>
    <property type="evidence" value="ECO:0007669"/>
    <property type="project" value="UniProtKB-SubCell"/>
</dbReference>
<dbReference type="GO" id="GO:0098027">
    <property type="term" value="C:virus tail, sheath"/>
    <property type="evidence" value="ECO:0007669"/>
    <property type="project" value="UniProtKB-KW"/>
</dbReference>
<dbReference type="GO" id="GO:0099000">
    <property type="term" value="P:symbiont genome ejection through host cell envelope, contractile tail mechanism"/>
    <property type="evidence" value="ECO:0007669"/>
    <property type="project" value="UniProtKB-KW"/>
</dbReference>
<evidence type="ECO:0000250" key="1">
    <source>
        <dbReference type="UniProtKB" id="P79678"/>
    </source>
</evidence>
<evidence type="ECO:0000305" key="2"/>
<evidence type="ECO:0000312" key="3">
    <source>
        <dbReference type="EMBL" id="AAN16780.1"/>
    </source>
</evidence>
<evidence type="ECO:0000312" key="4">
    <source>
        <dbReference type="Proteomes" id="UP000000730"/>
    </source>
</evidence>
<reference key="1">
    <citation type="journal article" date="2003" name="Cell">
        <title>Origins of highly mosaic mycobacteriophage genomes.</title>
        <authorList>
            <person name="Pedulla M.L."/>
            <person name="Ford M.E."/>
            <person name="Houtz J.M."/>
            <person name="Karthikeyan T."/>
            <person name="Wadsworth C."/>
            <person name="Lewis J.A."/>
            <person name="Jacobs-Sera D."/>
            <person name="Falbo J."/>
            <person name="Gross J."/>
            <person name="Pannunzio N.R."/>
            <person name="Brucker W."/>
            <person name="Kumar V."/>
            <person name="Kandasamy J."/>
            <person name="Keenan L."/>
            <person name="Bardarov S."/>
            <person name="Kriakov J."/>
            <person name="Lawrence J.G."/>
            <person name="Jacobs W.R. Jr."/>
            <person name="Hendrix R.W."/>
            <person name="Hatfull G.F."/>
        </authorList>
    </citation>
    <scope>NUCLEOTIDE SEQUENCE [GENOMIC DNA]</scope>
</reference>
<name>TSP_BPMBZ</name>
<keyword id="KW-1035">Host cytoplasm</keyword>
<keyword id="KW-1185">Reference proteome</keyword>
<keyword id="KW-1242">Viral contractile tail ejection system</keyword>
<keyword id="KW-1171">Viral genome ejection through host cell envelope</keyword>
<keyword id="KW-1162">Viral penetration into host cytoplasm</keyword>
<keyword id="KW-1227">Viral tail protein</keyword>
<keyword id="KW-1229">Viral tail sheath protein</keyword>
<keyword id="KW-0946">Virion</keyword>
<keyword id="KW-1160">Virus entry into host cell</keyword>